<feature type="chain" id="PRO_1000122042" description="Exodeoxyribonuclease 7 large subunit">
    <location>
        <begin position="1"/>
        <end position="452"/>
    </location>
</feature>
<gene>
    <name evidence="1" type="primary">xseA</name>
    <name type="ordered locus">BcerKBAB4_4032</name>
</gene>
<protein>
    <recommendedName>
        <fullName evidence="1">Exodeoxyribonuclease 7 large subunit</fullName>
        <ecNumber evidence="1">3.1.11.6</ecNumber>
    </recommendedName>
    <alternativeName>
        <fullName evidence="1">Exodeoxyribonuclease VII large subunit</fullName>
        <shortName evidence="1">Exonuclease VII large subunit</shortName>
    </alternativeName>
</protein>
<name>EX7L_BACMK</name>
<organism>
    <name type="scientific">Bacillus mycoides (strain KBAB4)</name>
    <name type="common">Bacillus weihenstephanensis</name>
    <dbReference type="NCBI Taxonomy" id="315730"/>
    <lineage>
        <taxon>Bacteria</taxon>
        <taxon>Bacillati</taxon>
        <taxon>Bacillota</taxon>
        <taxon>Bacilli</taxon>
        <taxon>Bacillales</taxon>
        <taxon>Bacillaceae</taxon>
        <taxon>Bacillus</taxon>
        <taxon>Bacillus cereus group</taxon>
    </lineage>
</organism>
<proteinExistence type="inferred from homology"/>
<accession>A9VGD4</accession>
<dbReference type="EC" id="3.1.11.6" evidence="1"/>
<dbReference type="EMBL" id="CP000903">
    <property type="protein sequence ID" value="ABY45194.1"/>
    <property type="molecule type" value="Genomic_DNA"/>
</dbReference>
<dbReference type="RefSeq" id="WP_002015068.1">
    <property type="nucleotide sequence ID" value="NC_010184.1"/>
</dbReference>
<dbReference type="SMR" id="A9VGD4"/>
<dbReference type="GeneID" id="66266243"/>
<dbReference type="KEGG" id="bwe:BcerKBAB4_4032"/>
<dbReference type="eggNOG" id="COG1570">
    <property type="taxonomic scope" value="Bacteria"/>
</dbReference>
<dbReference type="HOGENOM" id="CLU_023625_3_1_9"/>
<dbReference type="Proteomes" id="UP000002154">
    <property type="component" value="Chromosome"/>
</dbReference>
<dbReference type="GO" id="GO:0005737">
    <property type="term" value="C:cytoplasm"/>
    <property type="evidence" value="ECO:0007669"/>
    <property type="project" value="UniProtKB-SubCell"/>
</dbReference>
<dbReference type="GO" id="GO:0009318">
    <property type="term" value="C:exodeoxyribonuclease VII complex"/>
    <property type="evidence" value="ECO:0007669"/>
    <property type="project" value="InterPro"/>
</dbReference>
<dbReference type="GO" id="GO:0008855">
    <property type="term" value="F:exodeoxyribonuclease VII activity"/>
    <property type="evidence" value="ECO:0007669"/>
    <property type="project" value="UniProtKB-UniRule"/>
</dbReference>
<dbReference type="GO" id="GO:0003676">
    <property type="term" value="F:nucleic acid binding"/>
    <property type="evidence" value="ECO:0007669"/>
    <property type="project" value="InterPro"/>
</dbReference>
<dbReference type="GO" id="GO:0006308">
    <property type="term" value="P:DNA catabolic process"/>
    <property type="evidence" value="ECO:0007669"/>
    <property type="project" value="UniProtKB-UniRule"/>
</dbReference>
<dbReference type="CDD" id="cd04489">
    <property type="entry name" value="ExoVII_LU_OBF"/>
    <property type="match status" value="1"/>
</dbReference>
<dbReference type="HAMAP" id="MF_00378">
    <property type="entry name" value="Exonuc_7_L"/>
    <property type="match status" value="1"/>
</dbReference>
<dbReference type="InterPro" id="IPR003753">
    <property type="entry name" value="Exonuc_VII_L"/>
</dbReference>
<dbReference type="InterPro" id="IPR020579">
    <property type="entry name" value="Exonuc_VII_lsu_C"/>
</dbReference>
<dbReference type="InterPro" id="IPR025824">
    <property type="entry name" value="OB-fold_nuc-bd_dom"/>
</dbReference>
<dbReference type="NCBIfam" id="TIGR00237">
    <property type="entry name" value="xseA"/>
    <property type="match status" value="1"/>
</dbReference>
<dbReference type="PANTHER" id="PTHR30008">
    <property type="entry name" value="EXODEOXYRIBONUCLEASE 7 LARGE SUBUNIT"/>
    <property type="match status" value="1"/>
</dbReference>
<dbReference type="PANTHER" id="PTHR30008:SF0">
    <property type="entry name" value="EXODEOXYRIBONUCLEASE 7 LARGE SUBUNIT"/>
    <property type="match status" value="1"/>
</dbReference>
<dbReference type="Pfam" id="PF02601">
    <property type="entry name" value="Exonuc_VII_L"/>
    <property type="match status" value="1"/>
</dbReference>
<dbReference type="Pfam" id="PF13742">
    <property type="entry name" value="tRNA_anti_2"/>
    <property type="match status" value="1"/>
</dbReference>
<comment type="function">
    <text evidence="1">Bidirectionally degrades single-stranded DNA into large acid-insoluble oligonucleotides, which are then degraded further into small acid-soluble oligonucleotides.</text>
</comment>
<comment type="catalytic activity">
    <reaction evidence="1">
        <text>Exonucleolytic cleavage in either 5'- to 3'- or 3'- to 5'-direction to yield nucleoside 5'-phosphates.</text>
        <dbReference type="EC" id="3.1.11.6"/>
    </reaction>
</comment>
<comment type="subunit">
    <text evidence="1">Heterooligomer composed of large and small subunits.</text>
</comment>
<comment type="subcellular location">
    <subcellularLocation>
        <location evidence="1">Cytoplasm</location>
    </subcellularLocation>
</comment>
<comment type="similarity">
    <text evidence="1">Belongs to the XseA family.</text>
</comment>
<sequence>MEKQYLTVTALTRYIKTKIEYDPHLQSVWLKGEISNFKYHSRGHMYFTLKDENARIAAVMFAGHNRNIKFRPENGMKVLVKGKISVYEASGSYQIYIQDMQPDGIGNLHLAYEQLKVRLEEEGLFSQVYKKIIPPYAKTIGVITSPTGAAIRDIITTIKRRYPIGNVIVFPVLVQGESAAPSIVQAIRTANEMGDIDVLIVGRGGGSIEELWAFNEEVVAREIFTSEIPIISAVGHETDFTIADFVADLRAPTPTAAAELAVPNTIELQEKVLQRTLRLQRAMRERVHKKEEKLQVLQKSYAFRYPRQVYEQKEEQLDRALEQLVLAKERYIDKKVNQLKQLSFYLEKHHPSQKIIQTKTAIETLQKQLQREMQTLLQTKEFVFVRAAQKLEVLSPLKVMMRGYGLVYDEEKQVLKSVKDVSLGDAVSVQLQDGILDCSVSSIEERELNNGK</sequence>
<reference key="1">
    <citation type="journal article" date="2008" name="Chem. Biol. Interact.">
        <title>Extending the Bacillus cereus group genomics to putative food-borne pathogens of different toxicity.</title>
        <authorList>
            <person name="Lapidus A."/>
            <person name="Goltsman E."/>
            <person name="Auger S."/>
            <person name="Galleron N."/>
            <person name="Segurens B."/>
            <person name="Dossat C."/>
            <person name="Land M.L."/>
            <person name="Broussolle V."/>
            <person name="Brillard J."/>
            <person name="Guinebretiere M.-H."/>
            <person name="Sanchis V."/>
            <person name="Nguen-the C."/>
            <person name="Lereclus D."/>
            <person name="Richardson P."/>
            <person name="Wincker P."/>
            <person name="Weissenbach J."/>
            <person name="Ehrlich S.D."/>
            <person name="Sorokin A."/>
        </authorList>
    </citation>
    <scope>NUCLEOTIDE SEQUENCE [LARGE SCALE GENOMIC DNA]</scope>
    <source>
        <strain>KBAB4</strain>
    </source>
</reference>
<keyword id="KW-0963">Cytoplasm</keyword>
<keyword id="KW-0269">Exonuclease</keyword>
<keyword id="KW-0378">Hydrolase</keyword>
<keyword id="KW-0540">Nuclease</keyword>
<evidence type="ECO:0000255" key="1">
    <source>
        <dbReference type="HAMAP-Rule" id="MF_00378"/>
    </source>
</evidence>